<keyword id="KW-0997">Cell inner membrane</keyword>
<keyword id="KW-1003">Cell membrane</keyword>
<keyword id="KW-0472">Membrane</keyword>
<keyword id="KW-1185">Reference proteome</keyword>
<keyword id="KW-0812">Transmembrane</keyword>
<keyword id="KW-1133">Transmembrane helix</keyword>
<keyword id="KW-0813">Transport</keyword>
<comment type="function">
    <text evidence="1">Catalyzes the excretion of spermidine.</text>
</comment>
<comment type="subunit">
    <text evidence="1">Forms a complex with MdtJ.</text>
</comment>
<comment type="subcellular location">
    <subcellularLocation>
        <location evidence="1">Cell inner membrane</location>
        <topology evidence="1">Multi-pass membrane protein</topology>
    </subcellularLocation>
</comment>
<comment type="similarity">
    <text evidence="3">Belongs to the drug/metabolite transporter (DMT) superfamily. Small multidrug resistance (SMR) (TC 2.A.7.1) family. MdtI subfamily.</text>
</comment>
<accession>Q83RD1</accession>
<accession>Q7C1H9</accession>
<proteinExistence type="inferred from homology"/>
<name>MDTI_SHIFL</name>
<sequence length="109" mass="11748">MAQFEWVHAAWLALAIVLEIVANVFLKFSDGFRRKIFGLLSLAAVLAAFSALSQAVKGIDLSVVYALWGGFGIAATLAAGWILFGQRLNRKGWIGLVLLLAGMIMVKLA</sequence>
<gene>
    <name type="primary">mdtI</name>
    <name type="ordered locus">SF1620</name>
    <name type="ordered locus">S1752</name>
</gene>
<dbReference type="EMBL" id="AE005674">
    <property type="protein sequence ID" value="AAN43203.1"/>
    <property type="molecule type" value="Genomic_DNA"/>
</dbReference>
<dbReference type="EMBL" id="AE014073">
    <property type="protein sequence ID" value="AAP17091.1"/>
    <property type="molecule type" value="Genomic_DNA"/>
</dbReference>
<dbReference type="RefSeq" id="NP_707496.1">
    <property type="nucleotide sequence ID" value="NC_004337.2"/>
</dbReference>
<dbReference type="RefSeq" id="WP_000046666.1">
    <property type="nucleotide sequence ID" value="NZ_WPGW01000024.1"/>
</dbReference>
<dbReference type="SMR" id="Q83RD1"/>
<dbReference type="STRING" id="198214.SF1620"/>
<dbReference type="PaxDb" id="198214-SF1620"/>
<dbReference type="GeneID" id="1024848"/>
<dbReference type="KEGG" id="sfl:SF1620"/>
<dbReference type="KEGG" id="sfx:S1752"/>
<dbReference type="PATRIC" id="fig|198214.7.peg.1914"/>
<dbReference type="HOGENOM" id="CLU_133067_0_4_6"/>
<dbReference type="Proteomes" id="UP000001006">
    <property type="component" value="Chromosome"/>
</dbReference>
<dbReference type="Proteomes" id="UP000002673">
    <property type="component" value="Chromosome"/>
</dbReference>
<dbReference type="GO" id="GO:0005886">
    <property type="term" value="C:plasma membrane"/>
    <property type="evidence" value="ECO:0007669"/>
    <property type="project" value="UniProtKB-SubCell"/>
</dbReference>
<dbReference type="GO" id="GO:0015199">
    <property type="term" value="F:amino-acid betaine transmembrane transporter activity"/>
    <property type="evidence" value="ECO:0007669"/>
    <property type="project" value="TreeGrafter"/>
</dbReference>
<dbReference type="GO" id="GO:0015297">
    <property type="term" value="F:antiporter activity"/>
    <property type="evidence" value="ECO:0007669"/>
    <property type="project" value="TreeGrafter"/>
</dbReference>
<dbReference type="GO" id="GO:0015220">
    <property type="term" value="F:choline transmembrane transporter activity"/>
    <property type="evidence" value="ECO:0007669"/>
    <property type="project" value="TreeGrafter"/>
</dbReference>
<dbReference type="GO" id="GO:0015606">
    <property type="term" value="F:spermidine transmembrane transporter activity"/>
    <property type="evidence" value="ECO:0007669"/>
    <property type="project" value="UniProtKB-UniRule"/>
</dbReference>
<dbReference type="GO" id="GO:0031460">
    <property type="term" value="P:glycine betaine transport"/>
    <property type="evidence" value="ECO:0007669"/>
    <property type="project" value="TreeGrafter"/>
</dbReference>
<dbReference type="FunFam" id="1.10.3730.20:FF:000001">
    <property type="entry name" value="Quaternary ammonium compound resistance transporter SugE"/>
    <property type="match status" value="1"/>
</dbReference>
<dbReference type="Gene3D" id="1.10.3730.20">
    <property type="match status" value="1"/>
</dbReference>
<dbReference type="HAMAP" id="MF_01597">
    <property type="entry name" value="MdtI"/>
    <property type="match status" value="1"/>
</dbReference>
<dbReference type="InterPro" id="IPR000390">
    <property type="entry name" value="Small_drug/metabolite_transptr"/>
</dbReference>
<dbReference type="InterPro" id="IPR045324">
    <property type="entry name" value="Small_multidrug_res"/>
</dbReference>
<dbReference type="InterPro" id="IPR023737">
    <property type="entry name" value="Spermidine_export_MdtI"/>
</dbReference>
<dbReference type="NCBIfam" id="NF007934">
    <property type="entry name" value="PRK10650.1"/>
    <property type="match status" value="1"/>
</dbReference>
<dbReference type="PANTHER" id="PTHR30561">
    <property type="entry name" value="SMR FAMILY PROTON-DEPENDENT DRUG EFFLUX TRANSPORTER SUGE"/>
    <property type="match status" value="1"/>
</dbReference>
<dbReference type="PANTHER" id="PTHR30561:SF6">
    <property type="entry name" value="SPERMIDINE EXPORT PROTEIN MDTI"/>
    <property type="match status" value="1"/>
</dbReference>
<dbReference type="Pfam" id="PF00893">
    <property type="entry name" value="Multi_Drug_Res"/>
    <property type="match status" value="1"/>
</dbReference>
<dbReference type="SUPFAM" id="SSF103481">
    <property type="entry name" value="Multidrug resistance efflux transporter EmrE"/>
    <property type="match status" value="1"/>
</dbReference>
<reference key="1">
    <citation type="journal article" date="2002" name="Nucleic Acids Res.">
        <title>Genome sequence of Shigella flexneri 2a: insights into pathogenicity through comparison with genomes of Escherichia coli K12 and O157.</title>
        <authorList>
            <person name="Jin Q."/>
            <person name="Yuan Z."/>
            <person name="Xu J."/>
            <person name="Wang Y."/>
            <person name="Shen Y."/>
            <person name="Lu W."/>
            <person name="Wang J."/>
            <person name="Liu H."/>
            <person name="Yang J."/>
            <person name="Yang F."/>
            <person name="Zhang X."/>
            <person name="Zhang J."/>
            <person name="Yang G."/>
            <person name="Wu H."/>
            <person name="Qu D."/>
            <person name="Dong J."/>
            <person name="Sun L."/>
            <person name="Xue Y."/>
            <person name="Zhao A."/>
            <person name="Gao Y."/>
            <person name="Zhu J."/>
            <person name="Kan B."/>
            <person name="Ding K."/>
            <person name="Chen S."/>
            <person name="Cheng H."/>
            <person name="Yao Z."/>
            <person name="He B."/>
            <person name="Chen R."/>
            <person name="Ma D."/>
            <person name="Qiang B."/>
            <person name="Wen Y."/>
            <person name="Hou Y."/>
            <person name="Yu J."/>
        </authorList>
    </citation>
    <scope>NUCLEOTIDE SEQUENCE [LARGE SCALE GENOMIC DNA]</scope>
    <source>
        <strain>301 / Serotype 2a</strain>
    </source>
</reference>
<reference key="2">
    <citation type="journal article" date="2003" name="Infect. Immun.">
        <title>Complete genome sequence and comparative genomics of Shigella flexneri serotype 2a strain 2457T.</title>
        <authorList>
            <person name="Wei J."/>
            <person name="Goldberg M.B."/>
            <person name="Burland V."/>
            <person name="Venkatesan M.M."/>
            <person name="Deng W."/>
            <person name="Fournier G."/>
            <person name="Mayhew G.F."/>
            <person name="Plunkett G. III"/>
            <person name="Rose D.J."/>
            <person name="Darling A."/>
            <person name="Mau B."/>
            <person name="Perna N.T."/>
            <person name="Payne S.M."/>
            <person name="Runyen-Janecky L.J."/>
            <person name="Zhou S."/>
            <person name="Schwartz D.C."/>
            <person name="Blattner F.R."/>
        </authorList>
    </citation>
    <scope>NUCLEOTIDE SEQUENCE [LARGE SCALE GENOMIC DNA]</scope>
    <source>
        <strain>ATCC 700930 / 2457T / Serotype 2a</strain>
    </source>
</reference>
<protein>
    <recommendedName>
        <fullName>Spermidine export protein MdtI</fullName>
    </recommendedName>
</protein>
<evidence type="ECO:0000250" key="1"/>
<evidence type="ECO:0000255" key="2"/>
<evidence type="ECO:0000255" key="3">
    <source>
        <dbReference type="HAMAP-Rule" id="MF_01597"/>
    </source>
</evidence>
<feature type="chain" id="PRO_0000108078" description="Spermidine export protein MdtI">
    <location>
        <begin position="1"/>
        <end position="109"/>
    </location>
</feature>
<feature type="topological domain" description="Periplasmic" evidence="2">
    <location>
        <begin position="1"/>
        <end position="5"/>
    </location>
</feature>
<feature type="transmembrane region" description="Helical" evidence="2">
    <location>
        <begin position="6"/>
        <end position="26"/>
    </location>
</feature>
<feature type="topological domain" description="Cytoplasmic" evidence="2">
    <location>
        <begin position="27"/>
        <end position="35"/>
    </location>
</feature>
<feature type="transmembrane region" description="Helical" evidence="2">
    <location>
        <begin position="36"/>
        <end position="56"/>
    </location>
</feature>
<feature type="topological domain" description="Periplasmic" evidence="2">
    <location>
        <begin position="57"/>
        <end position="63"/>
    </location>
</feature>
<feature type="transmembrane region" description="Helical" evidence="2">
    <location>
        <begin position="64"/>
        <end position="84"/>
    </location>
</feature>
<feature type="topological domain" description="Cytoplasmic" evidence="2">
    <location>
        <begin position="85"/>
        <end position="87"/>
    </location>
</feature>
<feature type="transmembrane region" description="Helical" evidence="2">
    <location>
        <begin position="88"/>
        <end position="108"/>
    </location>
</feature>
<feature type="topological domain" description="Periplasmic" evidence="2">
    <location>
        <position position="109"/>
    </location>
</feature>
<organism>
    <name type="scientific">Shigella flexneri</name>
    <dbReference type="NCBI Taxonomy" id="623"/>
    <lineage>
        <taxon>Bacteria</taxon>
        <taxon>Pseudomonadati</taxon>
        <taxon>Pseudomonadota</taxon>
        <taxon>Gammaproteobacteria</taxon>
        <taxon>Enterobacterales</taxon>
        <taxon>Enterobacteriaceae</taxon>
        <taxon>Shigella</taxon>
    </lineage>
</organism>